<gene>
    <name type="primary">hmgA</name>
    <name type="ORF">AN1897</name>
</gene>
<feature type="chain" id="PRO_0000220245" description="Homogentisate 1,2-dioxygenase">
    <location>
        <begin position="1"/>
        <end position="448"/>
    </location>
</feature>
<feature type="binding site" evidence="1">
    <location>
        <position position="340"/>
    </location>
    <ligand>
        <name>Fe cation</name>
        <dbReference type="ChEBI" id="CHEBI:24875"/>
    </ligand>
</feature>
<feature type="binding site" evidence="1">
    <location>
        <position position="346"/>
    </location>
    <ligand>
        <name>Fe cation</name>
        <dbReference type="ChEBI" id="CHEBI:24875"/>
    </ligand>
</feature>
<feature type="binding site" evidence="1">
    <location>
        <position position="377"/>
    </location>
    <ligand>
        <name>Fe cation</name>
        <dbReference type="ChEBI" id="CHEBI:24875"/>
    </ligand>
</feature>
<comment type="catalytic activity">
    <reaction evidence="2">
        <text>homogentisate + O2 = 4-maleylacetoacetate + H(+)</text>
        <dbReference type="Rhea" id="RHEA:15449"/>
        <dbReference type="ChEBI" id="CHEBI:15378"/>
        <dbReference type="ChEBI" id="CHEBI:15379"/>
        <dbReference type="ChEBI" id="CHEBI:16169"/>
        <dbReference type="ChEBI" id="CHEBI:17105"/>
        <dbReference type="EC" id="1.13.11.5"/>
    </reaction>
</comment>
<comment type="cofactor">
    <cofactor>
        <name>Fe cation</name>
        <dbReference type="ChEBI" id="CHEBI:24875"/>
    </cofactor>
</comment>
<comment type="pathway">
    <text>Amino-acid degradation; L-phenylalanine degradation; acetoacetate and fumarate from L-phenylalanine: step 4/6.</text>
</comment>
<comment type="induction">
    <text evidence="2">During growth with phenylacetate and phenylalanine.</text>
</comment>
<comment type="similarity">
    <text evidence="3">Belongs to the homogentisate dioxygenase family.</text>
</comment>
<evidence type="ECO:0000250" key="1"/>
<evidence type="ECO:0000269" key="2">
    <source>
    </source>
</evidence>
<evidence type="ECO:0000305" key="3"/>
<accession>Q00667</accession>
<accession>C8VKJ8</accession>
<accession>Q5BC33</accession>
<dbReference type="EC" id="1.13.11.5" evidence="2"/>
<dbReference type="EMBL" id="U30797">
    <property type="protein sequence ID" value="AAC49071.1"/>
    <property type="molecule type" value="Genomic_DNA"/>
</dbReference>
<dbReference type="EMBL" id="AJ001836">
    <property type="protein sequence ID" value="CAA05042.1"/>
    <property type="molecule type" value="Genomic_DNA"/>
</dbReference>
<dbReference type="EMBL" id="AACD01000029">
    <property type="protein sequence ID" value="EAA65062.1"/>
    <property type="molecule type" value="Genomic_DNA"/>
</dbReference>
<dbReference type="EMBL" id="BN001307">
    <property type="protein sequence ID" value="CBF85779.1"/>
    <property type="molecule type" value="Genomic_DNA"/>
</dbReference>
<dbReference type="PIR" id="A57435">
    <property type="entry name" value="A57435"/>
</dbReference>
<dbReference type="RefSeq" id="XP_659501.1">
    <property type="nucleotide sequence ID" value="XM_654409.1"/>
</dbReference>
<dbReference type="SMR" id="Q00667"/>
<dbReference type="STRING" id="227321.Q00667"/>
<dbReference type="EnsemblFungi" id="CBF85779">
    <property type="protein sequence ID" value="CBF85779"/>
    <property type="gene ID" value="ANIA_01897"/>
</dbReference>
<dbReference type="KEGG" id="ani:ANIA_01897"/>
<dbReference type="VEuPathDB" id="FungiDB:AN1897"/>
<dbReference type="eggNOG" id="KOG1417">
    <property type="taxonomic scope" value="Eukaryota"/>
</dbReference>
<dbReference type="HOGENOM" id="CLU_027174_0_0_1"/>
<dbReference type="InParanoid" id="Q00667"/>
<dbReference type="OMA" id="MLPHGPD"/>
<dbReference type="OrthoDB" id="1689029at2759"/>
<dbReference type="BioCyc" id="MetaCyc:MONOMER-12040"/>
<dbReference type="BRENDA" id="1.13.11.5">
    <property type="organism ID" value="517"/>
</dbReference>
<dbReference type="UniPathway" id="UPA00139">
    <property type="reaction ID" value="UER00339"/>
</dbReference>
<dbReference type="Proteomes" id="UP000000560">
    <property type="component" value="Chromosome VII"/>
</dbReference>
<dbReference type="GO" id="GO:0004411">
    <property type="term" value="F:homogentisate 1,2-dioxygenase activity"/>
    <property type="evidence" value="ECO:0000314"/>
    <property type="project" value="AspGD"/>
</dbReference>
<dbReference type="GO" id="GO:0046872">
    <property type="term" value="F:metal ion binding"/>
    <property type="evidence" value="ECO:0007669"/>
    <property type="project" value="UniProtKB-KW"/>
</dbReference>
<dbReference type="GO" id="GO:0006559">
    <property type="term" value="P:L-phenylalanine catabolic process"/>
    <property type="evidence" value="ECO:0000315"/>
    <property type="project" value="AspGD"/>
</dbReference>
<dbReference type="GO" id="GO:0006572">
    <property type="term" value="P:tyrosine catabolic process"/>
    <property type="evidence" value="ECO:0007669"/>
    <property type="project" value="UniProtKB-KW"/>
</dbReference>
<dbReference type="CDD" id="cd07000">
    <property type="entry name" value="cupin_HGO_N"/>
    <property type="match status" value="1"/>
</dbReference>
<dbReference type="FunFam" id="2.60.120.10:FF:000053">
    <property type="entry name" value="Homogentisate 1,2-dioxygenase"/>
    <property type="match status" value="1"/>
</dbReference>
<dbReference type="Gene3D" id="2.60.120.10">
    <property type="entry name" value="Jelly Rolls"/>
    <property type="match status" value="1"/>
</dbReference>
<dbReference type="InterPro" id="IPR046451">
    <property type="entry name" value="HgmA_C"/>
</dbReference>
<dbReference type="InterPro" id="IPR046452">
    <property type="entry name" value="HgmA_N"/>
</dbReference>
<dbReference type="InterPro" id="IPR005708">
    <property type="entry name" value="Homogentis_dOase"/>
</dbReference>
<dbReference type="InterPro" id="IPR014710">
    <property type="entry name" value="RmlC-like_jellyroll"/>
</dbReference>
<dbReference type="InterPro" id="IPR011051">
    <property type="entry name" value="RmlC_Cupin_sf"/>
</dbReference>
<dbReference type="NCBIfam" id="TIGR01015">
    <property type="entry name" value="hmgA"/>
    <property type="match status" value="1"/>
</dbReference>
<dbReference type="PANTHER" id="PTHR11056">
    <property type="entry name" value="HOMOGENTISATE 1,2-DIOXYGENASE"/>
    <property type="match status" value="1"/>
</dbReference>
<dbReference type="PANTHER" id="PTHR11056:SF0">
    <property type="entry name" value="HOMOGENTISATE 1,2-DIOXYGENASE"/>
    <property type="match status" value="1"/>
</dbReference>
<dbReference type="Pfam" id="PF04209">
    <property type="entry name" value="HgmA_C"/>
    <property type="match status" value="1"/>
</dbReference>
<dbReference type="Pfam" id="PF20510">
    <property type="entry name" value="HgmA_N"/>
    <property type="match status" value="1"/>
</dbReference>
<dbReference type="SUPFAM" id="SSF51182">
    <property type="entry name" value="RmlC-like cupins"/>
    <property type="match status" value="1"/>
</dbReference>
<keyword id="KW-0223">Dioxygenase</keyword>
<keyword id="KW-0408">Iron</keyword>
<keyword id="KW-0479">Metal-binding</keyword>
<keyword id="KW-0560">Oxidoreductase</keyword>
<keyword id="KW-0585">Phenylalanine catabolism</keyword>
<keyword id="KW-1185">Reference proteome</keyword>
<keyword id="KW-0828">Tyrosine catabolism</keyword>
<reference key="1">
    <citation type="journal article" date="1995" name="J. Biol. Chem.">
        <title>Molecular characterization of a gene encoding a homogentisate dioxygenase from Aspergillus nidulans and identification of its human and plant homologues.</title>
        <authorList>
            <person name="Fernandez-Canon J.M."/>
            <person name="Penalva M.A."/>
        </authorList>
    </citation>
    <scope>NUCLEOTIDE SEQUENCE [GENOMIC DNA]</scope>
    <scope>CATALYTIC ACTIVITY</scope>
    <scope>INDUCTION</scope>
    <source>
        <strain>biA1</strain>
    </source>
</reference>
<reference key="2">
    <citation type="journal article" date="2005" name="Nature">
        <title>Sequencing of Aspergillus nidulans and comparative analysis with A. fumigatus and A. oryzae.</title>
        <authorList>
            <person name="Galagan J.E."/>
            <person name="Calvo S.E."/>
            <person name="Cuomo C."/>
            <person name="Ma L.-J."/>
            <person name="Wortman J.R."/>
            <person name="Batzoglou S."/>
            <person name="Lee S.-I."/>
            <person name="Bastuerkmen M."/>
            <person name="Spevak C.C."/>
            <person name="Clutterbuck J."/>
            <person name="Kapitonov V."/>
            <person name="Jurka J."/>
            <person name="Scazzocchio C."/>
            <person name="Farman M.L."/>
            <person name="Butler J."/>
            <person name="Purcell S."/>
            <person name="Harris S."/>
            <person name="Braus G.H."/>
            <person name="Draht O."/>
            <person name="Busch S."/>
            <person name="D'Enfert C."/>
            <person name="Bouchier C."/>
            <person name="Goldman G.H."/>
            <person name="Bell-Pedersen D."/>
            <person name="Griffiths-Jones S."/>
            <person name="Doonan J.H."/>
            <person name="Yu J."/>
            <person name="Vienken K."/>
            <person name="Pain A."/>
            <person name="Freitag M."/>
            <person name="Selker E.U."/>
            <person name="Archer D.B."/>
            <person name="Penalva M.A."/>
            <person name="Oakley B.R."/>
            <person name="Momany M."/>
            <person name="Tanaka T."/>
            <person name="Kumagai T."/>
            <person name="Asai K."/>
            <person name="Machida M."/>
            <person name="Nierman W.C."/>
            <person name="Denning D.W."/>
            <person name="Caddick M.X."/>
            <person name="Hynes M."/>
            <person name="Paoletti M."/>
            <person name="Fischer R."/>
            <person name="Miller B.L."/>
            <person name="Dyer P.S."/>
            <person name="Sachs M.S."/>
            <person name="Osmani S.A."/>
            <person name="Birren B.W."/>
        </authorList>
    </citation>
    <scope>NUCLEOTIDE SEQUENCE [LARGE SCALE GENOMIC DNA]</scope>
    <source>
        <strain>FGSC A4 / ATCC 38163 / CBS 112.46 / NRRL 194 / M139</strain>
    </source>
</reference>
<reference key="3">
    <citation type="journal article" date="2009" name="Fungal Genet. Biol.">
        <title>The 2008 update of the Aspergillus nidulans genome annotation: a community effort.</title>
        <authorList>
            <person name="Wortman J.R."/>
            <person name="Gilsenan J.M."/>
            <person name="Joardar V."/>
            <person name="Deegan J."/>
            <person name="Clutterbuck J."/>
            <person name="Andersen M.R."/>
            <person name="Archer D."/>
            <person name="Bencina M."/>
            <person name="Braus G."/>
            <person name="Coutinho P."/>
            <person name="von Dohren H."/>
            <person name="Doonan J."/>
            <person name="Driessen A.J."/>
            <person name="Durek P."/>
            <person name="Espeso E."/>
            <person name="Fekete E."/>
            <person name="Flipphi M."/>
            <person name="Estrada C.G."/>
            <person name="Geysens S."/>
            <person name="Goldman G."/>
            <person name="de Groot P.W."/>
            <person name="Hansen K."/>
            <person name="Harris S.D."/>
            <person name="Heinekamp T."/>
            <person name="Helmstaedt K."/>
            <person name="Henrissat B."/>
            <person name="Hofmann G."/>
            <person name="Homan T."/>
            <person name="Horio T."/>
            <person name="Horiuchi H."/>
            <person name="James S."/>
            <person name="Jones M."/>
            <person name="Karaffa L."/>
            <person name="Karanyi Z."/>
            <person name="Kato M."/>
            <person name="Keller N."/>
            <person name="Kelly D.E."/>
            <person name="Kiel J.A."/>
            <person name="Kim J.M."/>
            <person name="van der Klei I.J."/>
            <person name="Klis F.M."/>
            <person name="Kovalchuk A."/>
            <person name="Krasevec N."/>
            <person name="Kubicek C.P."/>
            <person name="Liu B."/>
            <person name="Maccabe A."/>
            <person name="Meyer V."/>
            <person name="Mirabito P."/>
            <person name="Miskei M."/>
            <person name="Mos M."/>
            <person name="Mullins J."/>
            <person name="Nelson D.R."/>
            <person name="Nielsen J."/>
            <person name="Oakley B.R."/>
            <person name="Osmani S.A."/>
            <person name="Pakula T."/>
            <person name="Paszewski A."/>
            <person name="Paulsen I."/>
            <person name="Pilsyk S."/>
            <person name="Pocsi I."/>
            <person name="Punt P.J."/>
            <person name="Ram A.F."/>
            <person name="Ren Q."/>
            <person name="Robellet X."/>
            <person name="Robson G."/>
            <person name="Seiboth B."/>
            <person name="van Solingen P."/>
            <person name="Specht T."/>
            <person name="Sun J."/>
            <person name="Taheri-Talesh N."/>
            <person name="Takeshita N."/>
            <person name="Ussery D."/>
            <person name="vanKuyk P.A."/>
            <person name="Visser H."/>
            <person name="van de Vondervoort P.J."/>
            <person name="de Vries R.P."/>
            <person name="Walton J."/>
            <person name="Xiang X."/>
            <person name="Xiong Y."/>
            <person name="Zeng A.P."/>
            <person name="Brandt B.W."/>
            <person name="Cornell M.J."/>
            <person name="van den Hondel C.A."/>
            <person name="Visser J."/>
            <person name="Oliver S.G."/>
            <person name="Turner G."/>
        </authorList>
    </citation>
    <scope>GENOME REANNOTATION</scope>
    <source>
        <strain>FGSC A4 / ATCC 38163 / CBS 112.46 / NRRL 194 / M139</strain>
    </source>
</reference>
<proteinExistence type="evidence at protein level"/>
<name>HGD_EMENI</name>
<sequence length="448" mass="50168">MPVTEFSFKDPYTYQNGFDSYHESEAIEGALPVGHNSPQKAPYGLYAEKLSGTAFTAPRHENKQTWVYRILPAAAHENFVEEDASSYHTLSDAKKLQHIPNQLRWDPFDLDETVDWVHGLHLVAGSGDPTVKQGLGILLYAAGKDMGKEAFYSADGDFLIVAQHGVLDIQTELGRLLVRPNEICVIPRGVRYRVTLPDGPVRGYICELYQGHYQLPELGPIGSNGLANARDFQAPVAAFDDEEGPTEYRLYSKFNNHLFSARQDHTPFDIVAWHGNYYPYKYDLGRFNTMGSVSFDHPDPSIYTVLTGPSDHVGTAIADFVIFPPRWLVAEKTFRPPWYHRNTMSEFMGLITGNYDAKTGGGFQPAGASLHNIMSAHGPDMHAFEGASNADLKPTKIGDGSMAFMFESSLMVGVSEWGLKTCQKVQEEYNEHSWQPLKRHFKDPRKAQ</sequence>
<organism>
    <name type="scientific">Emericella nidulans (strain FGSC A4 / ATCC 38163 / CBS 112.46 / NRRL 194 / M139)</name>
    <name type="common">Aspergillus nidulans</name>
    <dbReference type="NCBI Taxonomy" id="227321"/>
    <lineage>
        <taxon>Eukaryota</taxon>
        <taxon>Fungi</taxon>
        <taxon>Dikarya</taxon>
        <taxon>Ascomycota</taxon>
        <taxon>Pezizomycotina</taxon>
        <taxon>Eurotiomycetes</taxon>
        <taxon>Eurotiomycetidae</taxon>
        <taxon>Eurotiales</taxon>
        <taxon>Aspergillaceae</taxon>
        <taxon>Aspergillus</taxon>
        <taxon>Aspergillus subgen. Nidulantes</taxon>
    </lineage>
</organism>
<protein>
    <recommendedName>
        <fullName>Homogentisate 1,2-dioxygenase</fullName>
        <ecNumber evidence="2">1.13.11.5</ecNumber>
    </recommendedName>
    <alternativeName>
        <fullName>Homogentisate oxygenase</fullName>
    </alternativeName>
    <alternativeName>
        <fullName>Homogentisic acid oxidase</fullName>
    </alternativeName>
    <alternativeName>
        <fullName>Homogentisicase</fullName>
    </alternativeName>
</protein>